<gene>
    <name type="primary">Slc25a39</name>
</gene>
<dbReference type="EMBL" id="BC097349">
    <property type="protein sequence ID" value="AAH97349.1"/>
    <property type="molecule type" value="mRNA"/>
</dbReference>
<dbReference type="RefSeq" id="NP_001019963.1">
    <property type="nucleotide sequence ID" value="NM_001024792.1"/>
</dbReference>
<dbReference type="RefSeq" id="XP_006247436.1">
    <property type="nucleotide sequence ID" value="XM_006247374.5"/>
</dbReference>
<dbReference type="RefSeq" id="XP_006247438.1">
    <property type="nucleotide sequence ID" value="XM_006247376.4"/>
</dbReference>
<dbReference type="RefSeq" id="XP_038942339.1">
    <property type="nucleotide sequence ID" value="XM_039086411.2"/>
</dbReference>
<dbReference type="SMR" id="Q4V8K4"/>
<dbReference type="FunCoup" id="Q4V8K4">
    <property type="interactions" value="1039"/>
</dbReference>
<dbReference type="STRING" id="10116.ENSRNOP00000028496"/>
<dbReference type="GlyGen" id="Q4V8K4">
    <property type="glycosylation" value="1 site"/>
</dbReference>
<dbReference type="iPTMnet" id="Q4V8K4"/>
<dbReference type="PhosphoSitePlus" id="Q4V8K4"/>
<dbReference type="PaxDb" id="10116-ENSRNOP00000028496"/>
<dbReference type="Ensembl" id="ENSRNOT00000096475.1">
    <property type="protein sequence ID" value="ENSRNOP00000090708.1"/>
    <property type="gene ID" value="ENSRNOG00000020994.7"/>
</dbReference>
<dbReference type="GeneID" id="360636"/>
<dbReference type="KEGG" id="rno:360636"/>
<dbReference type="UCSC" id="RGD:1306193">
    <property type="organism name" value="rat"/>
</dbReference>
<dbReference type="AGR" id="RGD:1306193"/>
<dbReference type="CTD" id="51629"/>
<dbReference type="RGD" id="1306193">
    <property type="gene designation" value="Slc25a39"/>
</dbReference>
<dbReference type="eggNOG" id="KOG0761">
    <property type="taxonomic scope" value="Eukaryota"/>
</dbReference>
<dbReference type="GeneTree" id="ENSGT00940000156382"/>
<dbReference type="HOGENOM" id="CLU_015166_0_0_1"/>
<dbReference type="InParanoid" id="Q4V8K4"/>
<dbReference type="PhylomeDB" id="Q4V8K4"/>
<dbReference type="TreeFam" id="TF314720"/>
<dbReference type="PRO" id="PR:Q4V8K4"/>
<dbReference type="Proteomes" id="UP000002494">
    <property type="component" value="Chromosome 10"/>
</dbReference>
<dbReference type="Bgee" id="ENSRNOG00000020994">
    <property type="expression patterns" value="Expressed in testis and 19 other cell types or tissues"/>
</dbReference>
<dbReference type="GO" id="GO:0005743">
    <property type="term" value="C:mitochondrial inner membrane"/>
    <property type="evidence" value="ECO:0000266"/>
    <property type="project" value="RGD"/>
</dbReference>
<dbReference type="GO" id="GO:0005739">
    <property type="term" value="C:mitochondrion"/>
    <property type="evidence" value="ECO:0000318"/>
    <property type="project" value="GO_Central"/>
</dbReference>
<dbReference type="GO" id="GO:0051537">
    <property type="term" value="F:2 iron, 2 sulfur cluster binding"/>
    <property type="evidence" value="ECO:0000250"/>
    <property type="project" value="UniProtKB"/>
</dbReference>
<dbReference type="GO" id="GO:0034634">
    <property type="term" value="F:glutathione transmembrane transporter activity"/>
    <property type="evidence" value="ECO:0000266"/>
    <property type="project" value="RGD"/>
</dbReference>
<dbReference type="GO" id="GO:0046872">
    <property type="term" value="F:metal ion binding"/>
    <property type="evidence" value="ECO:0007669"/>
    <property type="project" value="UniProtKB-KW"/>
</dbReference>
<dbReference type="GO" id="GO:0071281">
    <property type="term" value="P:cellular response to iron ion"/>
    <property type="evidence" value="ECO:0000266"/>
    <property type="project" value="RGD"/>
</dbReference>
<dbReference type="GO" id="GO:0160007">
    <property type="term" value="P:glutathione import into mitochondrion"/>
    <property type="evidence" value="ECO:0000250"/>
    <property type="project" value="UniProtKB"/>
</dbReference>
<dbReference type="GO" id="GO:0006783">
    <property type="term" value="P:heme biosynthetic process"/>
    <property type="evidence" value="ECO:0007669"/>
    <property type="project" value="UniProtKB-KW"/>
</dbReference>
<dbReference type="GO" id="GO:0170036">
    <property type="term" value="P:import into the mitochondrion"/>
    <property type="evidence" value="ECO:0000318"/>
    <property type="project" value="GO_Central"/>
</dbReference>
<dbReference type="FunFam" id="1.50.40.10:FF:000203">
    <property type="entry name" value="Solute carrier family 25 member 39"/>
    <property type="match status" value="1"/>
</dbReference>
<dbReference type="FunFam" id="1.50.40.10:FF:000159">
    <property type="entry name" value="solute carrier family 25 member 39 isoform X1"/>
    <property type="match status" value="1"/>
</dbReference>
<dbReference type="Gene3D" id="1.50.40.10">
    <property type="entry name" value="Mitochondrial carrier domain"/>
    <property type="match status" value="2"/>
</dbReference>
<dbReference type="InterPro" id="IPR018108">
    <property type="entry name" value="Mitochondrial_sb/sol_carrier"/>
</dbReference>
<dbReference type="InterPro" id="IPR023395">
    <property type="entry name" value="Mt_carrier_dom_sf"/>
</dbReference>
<dbReference type="InterPro" id="IPR045315">
    <property type="entry name" value="Mtm1-like"/>
</dbReference>
<dbReference type="PANTHER" id="PTHR45760">
    <property type="entry name" value="FI19922P1-RELATED"/>
    <property type="match status" value="1"/>
</dbReference>
<dbReference type="PANTHER" id="PTHR45760:SF1">
    <property type="entry name" value="MITOCHONDRIAL GLUTATHIONE TRANSPORTER SLC25A39-RELATED"/>
    <property type="match status" value="1"/>
</dbReference>
<dbReference type="Pfam" id="PF00153">
    <property type="entry name" value="Mito_carr"/>
    <property type="match status" value="4"/>
</dbReference>
<dbReference type="SUPFAM" id="SSF103506">
    <property type="entry name" value="Mitochondrial carrier"/>
    <property type="match status" value="1"/>
</dbReference>
<dbReference type="PROSITE" id="PS50920">
    <property type="entry name" value="SOLCAR"/>
    <property type="match status" value="3"/>
</dbReference>
<feature type="chain" id="PRO_0000289722" description="Mitochondrial glutathione transporter SLC25A39">
    <location>
        <begin position="1"/>
        <end position="359"/>
    </location>
</feature>
<feature type="topological domain" description="Mitochondrial intermembrane" evidence="3">
    <location>
        <begin position="1"/>
        <end position="14"/>
    </location>
</feature>
<feature type="transmembrane region" description="Helical; Name=1" evidence="2">
    <location>
        <begin position="15"/>
        <end position="35"/>
    </location>
</feature>
<feature type="topological domain" description="Mitochondrial matrix" evidence="3">
    <location>
        <begin position="36"/>
        <end position="121"/>
    </location>
</feature>
<feature type="transmembrane region" description="Helical; Name=2" evidence="2">
    <location>
        <begin position="122"/>
        <end position="142"/>
    </location>
</feature>
<feature type="topological domain" description="Mitochondrial intermembrane" evidence="3">
    <location>
        <begin position="143"/>
        <end position="164"/>
    </location>
</feature>
<feature type="transmembrane region" description="Helical; Name=3" evidence="2">
    <location>
        <begin position="165"/>
        <end position="185"/>
    </location>
</feature>
<feature type="topological domain" description="Mitochondrial matrix" evidence="3">
    <location>
        <begin position="186"/>
        <end position="214"/>
    </location>
</feature>
<feature type="transmembrane region" description="Helical; Name=4" evidence="2">
    <location>
        <begin position="215"/>
        <end position="235"/>
    </location>
</feature>
<feature type="topological domain" description="Mitochondrial intermembrane" evidence="3">
    <location>
        <begin position="236"/>
        <end position="255"/>
    </location>
</feature>
<feature type="transmembrane region" description="Helical; Name=5" evidence="2">
    <location>
        <begin position="256"/>
        <end position="276"/>
    </location>
</feature>
<feature type="topological domain" description="Mitochondrial matrix" evidence="3">
    <location>
        <begin position="277"/>
        <end position="317"/>
    </location>
</feature>
<feature type="transmembrane region" description="Helical; Name=6" evidence="2">
    <location>
        <begin position="318"/>
        <end position="338"/>
    </location>
</feature>
<feature type="topological domain" description="Mitochondrial intermembrane" evidence="3">
    <location>
        <begin position="339"/>
        <end position="359"/>
    </location>
</feature>
<feature type="repeat" description="Solcar 1">
    <location>
        <begin position="9"/>
        <end position="151"/>
    </location>
</feature>
<feature type="repeat" description="Solcar 2">
    <location>
        <begin position="159"/>
        <end position="243"/>
    </location>
</feature>
<feature type="repeat" description="Solcar 3">
    <location>
        <begin position="253"/>
        <end position="347"/>
    </location>
</feature>
<feature type="binding site" evidence="1">
    <location>
        <position position="74"/>
    </location>
    <ligand>
        <name>[2Fe-2S] cluster</name>
        <dbReference type="ChEBI" id="CHEBI:190135"/>
    </ligand>
</feature>
<feature type="binding site" evidence="1">
    <location>
        <position position="78"/>
    </location>
    <ligand>
        <name>[2Fe-2S] cluster</name>
        <dbReference type="ChEBI" id="CHEBI:190135"/>
    </ligand>
</feature>
<feature type="binding site" evidence="1">
    <location>
        <position position="88"/>
    </location>
    <ligand>
        <name>[2Fe-2S] cluster</name>
        <dbReference type="ChEBI" id="CHEBI:190135"/>
    </ligand>
</feature>
<feature type="binding site" evidence="1">
    <location>
        <position position="94"/>
    </location>
    <ligand>
        <name>[2Fe-2S] cluster</name>
        <dbReference type="ChEBI" id="CHEBI:190135"/>
    </ligand>
</feature>
<organism>
    <name type="scientific">Rattus norvegicus</name>
    <name type="common">Rat</name>
    <dbReference type="NCBI Taxonomy" id="10116"/>
    <lineage>
        <taxon>Eukaryota</taxon>
        <taxon>Metazoa</taxon>
        <taxon>Chordata</taxon>
        <taxon>Craniata</taxon>
        <taxon>Vertebrata</taxon>
        <taxon>Euteleostomi</taxon>
        <taxon>Mammalia</taxon>
        <taxon>Eutheria</taxon>
        <taxon>Euarchontoglires</taxon>
        <taxon>Glires</taxon>
        <taxon>Rodentia</taxon>
        <taxon>Myomorpha</taxon>
        <taxon>Muroidea</taxon>
        <taxon>Muridae</taxon>
        <taxon>Murinae</taxon>
        <taxon>Rattus</taxon>
    </lineage>
</organism>
<name>S2539_RAT</name>
<comment type="function">
    <text evidence="1">Mitochondrial transporter required for glutathione import into mitochondria. Glutathione, which plays key roles in oxidative metabolism, is produced exclusively in the cytosol and is imported in many organelles. Mitochondrial glutathione is required for the activity and stability of proteins containing iron-sulfur clusters, as well as erythropoiesis.</text>
</comment>
<comment type="catalytic activity">
    <reaction evidence="1">
        <text>glutathione(in) = glutathione(out)</text>
        <dbReference type="Rhea" id="RHEA:74819"/>
        <dbReference type="ChEBI" id="CHEBI:57925"/>
    </reaction>
</comment>
<comment type="activity regulation">
    <text evidence="1">The activity of SLC25A39 is regulated by levels of mitochondrial glutathione via its ability to bind [2Fe-2S] iron-sulfur cluster. Upon physiological levels of mitochondrial glutathione, glutathione prevents iron-sulfur-binding to SLC25A39 promoting cleavage and degradation by AFG3L2. Upon depletion of mitochondrial glutathione, SLC25A39 binds iron-sulfur, preventing cleavage and degradation by AFG3L2.</text>
</comment>
<comment type="subcellular location">
    <subcellularLocation>
        <location evidence="1">Mitochondrion inner membrane</location>
        <topology evidence="2">Multi-pass membrane protein</topology>
    </subcellularLocation>
</comment>
<comment type="PTM">
    <text evidence="1">Cleaved and degraded by AFG3L2; degradation by AFG3L2 is regulated by the ability of SLC25A39 to bind iron-sulfur. In absence of mitochondrial glutathione, SLC25A39 binds iron-sulfur, preventing cleavage and degradation by AFG3L2. The presence of mitochondrial glutathione prevents iron-sulfur-binding to SLC25A39, promoting cleavage and degradation by AFG3L2.</text>
</comment>
<comment type="similarity">
    <text evidence="3">Belongs to the mitochondrial carrier (TC 2.A.29) family.</text>
</comment>
<proteinExistence type="evidence at transcript level"/>
<reference key="1">
    <citation type="journal article" date="2004" name="Genome Res.">
        <title>The status, quality, and expansion of the NIH full-length cDNA project: the Mammalian Gene Collection (MGC).</title>
        <authorList>
            <consortium name="The MGC Project Team"/>
        </authorList>
    </citation>
    <scope>NUCLEOTIDE SEQUENCE [LARGE SCALE MRNA]</scope>
    <source>
        <tissue>Placenta</tissue>
    </source>
</reference>
<protein>
    <recommendedName>
        <fullName evidence="3">Mitochondrial glutathione transporter SLC25A39</fullName>
    </recommendedName>
    <alternativeName>
        <fullName evidence="3">Solute carrier family 25 member 39</fullName>
    </alternativeName>
</protein>
<keyword id="KW-0001">2Fe-2S</keyword>
<keyword id="KW-0350">Heme biosynthesis</keyword>
<keyword id="KW-0408">Iron</keyword>
<keyword id="KW-0411">Iron-sulfur</keyword>
<keyword id="KW-0472">Membrane</keyword>
<keyword id="KW-0479">Metal-binding</keyword>
<keyword id="KW-0496">Mitochondrion</keyword>
<keyword id="KW-0999">Mitochondrion inner membrane</keyword>
<keyword id="KW-1185">Reference proteome</keyword>
<keyword id="KW-0677">Repeat</keyword>
<keyword id="KW-0812">Transmembrane</keyword>
<keyword id="KW-1133">Transmembrane helix</keyword>
<keyword id="KW-0813">Transport</keyword>
<evidence type="ECO:0000250" key="1">
    <source>
        <dbReference type="UniProtKB" id="Q9BZJ4"/>
    </source>
</evidence>
<evidence type="ECO:0000255" key="2"/>
<evidence type="ECO:0000305" key="3"/>
<accession>Q4V8K4</accession>
<sequence>MDDQDPGGISPLQQMVASGAGAVVTSLFMTPLDVVKVRLQSQRPTVASELTTPSRFWSLSYTKSPSTLQSPGKCLLYCNGVLEPLYLCPNGTRCATWFQDPTRFTGTLDAFVKIVRHEGTRTLWSGLPATLVMTVPATAIYFTAYDQLKAFLCGQSLTSDLYAPMVAGALARMGTVTVVSPLELVRTKLQAQHVSYRELAACVQAAVAQGGWRSLWLGWGPTALRDVPFSALYWFNYELVKSQLNGPRQKEQTSVGISFVAGGISGMVAATLTLPFDVVKTQRQMSLGAVEAMRVKPPRVDSTWLLLRRIQAESGTRGLFAGFLPRIIKAAPSCAIMISTYEFGKSFFHRLNQEQPLGH</sequence>